<dbReference type="EMBL" id="CP000826">
    <property type="protein sequence ID" value="ABV42601.1"/>
    <property type="molecule type" value="Genomic_DNA"/>
</dbReference>
<dbReference type="SMR" id="A8GHL1"/>
<dbReference type="STRING" id="399741.Spro_3503"/>
<dbReference type="KEGG" id="spe:Spro_3503"/>
<dbReference type="eggNOG" id="ENOG5032YJI">
    <property type="taxonomic scope" value="Bacteria"/>
</dbReference>
<dbReference type="HOGENOM" id="CLU_198936_0_0_6"/>
<dbReference type="OrthoDB" id="6522148at2"/>
<dbReference type="GO" id="GO:0005886">
    <property type="term" value="C:plasma membrane"/>
    <property type="evidence" value="ECO:0007669"/>
    <property type="project" value="UniProtKB-SubCell"/>
</dbReference>
<dbReference type="HAMAP" id="MF_01566">
    <property type="entry name" value="UPF0370"/>
    <property type="match status" value="1"/>
</dbReference>
<dbReference type="InterPro" id="IPR020910">
    <property type="entry name" value="UPF0370"/>
</dbReference>
<dbReference type="NCBIfam" id="NF010185">
    <property type="entry name" value="PRK13664.1"/>
    <property type="match status" value="1"/>
</dbReference>
<dbReference type="Pfam" id="PF13980">
    <property type="entry name" value="UPF0370"/>
    <property type="match status" value="1"/>
</dbReference>
<proteinExistence type="inferred from homology"/>
<reference key="1">
    <citation type="submission" date="2007-09" db="EMBL/GenBank/DDBJ databases">
        <title>Complete sequence of chromosome of Serratia proteamaculans 568.</title>
        <authorList>
            <consortium name="US DOE Joint Genome Institute"/>
            <person name="Copeland A."/>
            <person name="Lucas S."/>
            <person name="Lapidus A."/>
            <person name="Barry K."/>
            <person name="Glavina del Rio T."/>
            <person name="Dalin E."/>
            <person name="Tice H."/>
            <person name="Pitluck S."/>
            <person name="Chain P."/>
            <person name="Malfatti S."/>
            <person name="Shin M."/>
            <person name="Vergez L."/>
            <person name="Schmutz J."/>
            <person name="Larimer F."/>
            <person name="Land M."/>
            <person name="Hauser L."/>
            <person name="Kyrpides N."/>
            <person name="Kim E."/>
            <person name="Taghavi S."/>
            <person name="Newman L."/>
            <person name="Vangronsveld J."/>
            <person name="van der Lelie D."/>
            <person name="Richardson P."/>
        </authorList>
    </citation>
    <scope>NUCLEOTIDE SEQUENCE [LARGE SCALE GENOMIC DNA]</scope>
    <source>
        <strain>568</strain>
    </source>
</reference>
<sequence length="61" mass="7421">MEWLADYWWIILLILVGMIISGIKELRRVDVKRYLADKPELPPHRDNNAEWDDDDDWPKKK</sequence>
<gene>
    <name type="ordered locus">Spro_3503</name>
</gene>
<evidence type="ECO:0000255" key="1">
    <source>
        <dbReference type="HAMAP-Rule" id="MF_01566"/>
    </source>
</evidence>
<evidence type="ECO:0000256" key="2">
    <source>
        <dbReference type="SAM" id="MobiDB-lite"/>
    </source>
</evidence>
<comment type="subcellular location">
    <subcellularLocation>
        <location evidence="1">Cell membrane</location>
        <topology evidence="1">Single-pass membrane protein</topology>
    </subcellularLocation>
</comment>
<comment type="similarity">
    <text evidence="1">Belongs to the UPF0370 family.</text>
</comment>
<accession>A8GHL1</accession>
<feature type="chain" id="PRO_1000069086" description="UPF0370 protein Spro_3503">
    <location>
        <begin position="1"/>
        <end position="61"/>
    </location>
</feature>
<feature type="transmembrane region" description="Helical" evidence="1">
    <location>
        <begin position="3"/>
        <end position="23"/>
    </location>
</feature>
<feature type="region of interest" description="Disordered" evidence="2">
    <location>
        <begin position="38"/>
        <end position="61"/>
    </location>
</feature>
<feature type="compositionally biased region" description="Basic and acidic residues" evidence="2">
    <location>
        <begin position="38"/>
        <end position="48"/>
    </location>
</feature>
<feature type="compositionally biased region" description="Acidic residues" evidence="2">
    <location>
        <begin position="49"/>
        <end position="61"/>
    </location>
</feature>
<keyword id="KW-1003">Cell membrane</keyword>
<keyword id="KW-0472">Membrane</keyword>
<keyword id="KW-0812">Transmembrane</keyword>
<keyword id="KW-1133">Transmembrane helix</keyword>
<protein>
    <recommendedName>
        <fullName evidence="1">UPF0370 protein Spro_3503</fullName>
    </recommendedName>
</protein>
<organism>
    <name type="scientific">Serratia proteamaculans (strain 568)</name>
    <dbReference type="NCBI Taxonomy" id="399741"/>
    <lineage>
        <taxon>Bacteria</taxon>
        <taxon>Pseudomonadati</taxon>
        <taxon>Pseudomonadota</taxon>
        <taxon>Gammaproteobacteria</taxon>
        <taxon>Enterobacterales</taxon>
        <taxon>Yersiniaceae</taxon>
        <taxon>Serratia</taxon>
    </lineage>
</organism>
<name>Y3503_SERP5</name>